<evidence type="ECO:0000269" key="1">
    <source>
    </source>
</evidence>
<evidence type="ECO:0000305" key="2"/>
<gene>
    <name type="primary">cspD</name>
    <name type="ordered locus">BSU21930</name>
</gene>
<feature type="chain" id="PRO_0000100297" description="Cold shock protein CspD">
    <location>
        <begin position="1"/>
        <end position="66"/>
    </location>
</feature>
<feature type="domain" description="CSD">
    <location>
        <begin position="4"/>
        <end position="63"/>
    </location>
</feature>
<name>CSPD_BACSU</name>
<sequence length="66" mass="7309">MQNGKVKWFNNEKGFGFIEVEGGDDVFVHFTAIEGDGYKSLEEGQEVSFEIVEGNRGPQASNVVKL</sequence>
<protein>
    <recommendedName>
        <fullName>Cold shock protein CspD</fullName>
    </recommendedName>
</protein>
<dbReference type="EMBL" id="L77246">
    <property type="protein sequence ID" value="AAA96623.1"/>
    <property type="molecule type" value="Genomic_DNA"/>
</dbReference>
<dbReference type="EMBL" id="AL009126">
    <property type="protein sequence ID" value="CAB14111.1"/>
    <property type="molecule type" value="Genomic_DNA"/>
</dbReference>
<dbReference type="EMBL" id="M15318">
    <property type="status" value="NOT_ANNOTATED_CDS"/>
    <property type="molecule type" value="Genomic_DNA"/>
</dbReference>
<dbReference type="PIR" id="F69608">
    <property type="entry name" value="F69608"/>
</dbReference>
<dbReference type="RefSeq" id="NP_390076.1">
    <property type="nucleotide sequence ID" value="NC_000964.3"/>
</dbReference>
<dbReference type="RefSeq" id="WP_003230776.1">
    <property type="nucleotide sequence ID" value="NZ_OZ025638.1"/>
</dbReference>
<dbReference type="SMR" id="P51777"/>
<dbReference type="FunCoup" id="P51777">
    <property type="interactions" value="163"/>
</dbReference>
<dbReference type="STRING" id="224308.BSU21930"/>
<dbReference type="jPOST" id="P51777"/>
<dbReference type="PaxDb" id="224308-BSU21930"/>
<dbReference type="EnsemblBacteria" id="CAB14111">
    <property type="protein sequence ID" value="CAB14111"/>
    <property type="gene ID" value="BSU_21930"/>
</dbReference>
<dbReference type="GeneID" id="76987108"/>
<dbReference type="GeneID" id="939079"/>
<dbReference type="KEGG" id="bsu:BSU21930"/>
<dbReference type="PATRIC" id="fig|224308.179.peg.2395"/>
<dbReference type="eggNOG" id="COG1278">
    <property type="taxonomic scope" value="Bacteria"/>
</dbReference>
<dbReference type="InParanoid" id="P51777"/>
<dbReference type="OrthoDB" id="9805039at2"/>
<dbReference type="PhylomeDB" id="P51777"/>
<dbReference type="BioCyc" id="BSUB:BSU21930-MONOMER"/>
<dbReference type="Proteomes" id="UP000001570">
    <property type="component" value="Chromosome"/>
</dbReference>
<dbReference type="GO" id="GO:0005737">
    <property type="term" value="C:cytoplasm"/>
    <property type="evidence" value="ECO:0007669"/>
    <property type="project" value="UniProtKB-SubCell"/>
</dbReference>
<dbReference type="GO" id="GO:0003677">
    <property type="term" value="F:DNA binding"/>
    <property type="evidence" value="ECO:0007669"/>
    <property type="project" value="UniProtKB-KW"/>
</dbReference>
<dbReference type="GO" id="GO:0003676">
    <property type="term" value="F:nucleic acid binding"/>
    <property type="evidence" value="ECO:0000318"/>
    <property type="project" value="GO_Central"/>
</dbReference>
<dbReference type="GO" id="GO:0010468">
    <property type="term" value="P:regulation of gene expression"/>
    <property type="evidence" value="ECO:0000318"/>
    <property type="project" value="GO_Central"/>
</dbReference>
<dbReference type="CDD" id="cd04458">
    <property type="entry name" value="CSP_CDS"/>
    <property type="match status" value="1"/>
</dbReference>
<dbReference type="FunFam" id="2.40.50.140:FF:000006">
    <property type="entry name" value="Cold shock protein CspC"/>
    <property type="match status" value="1"/>
</dbReference>
<dbReference type="Gene3D" id="6.20.370.130">
    <property type="match status" value="1"/>
</dbReference>
<dbReference type="Gene3D" id="2.40.50.140">
    <property type="entry name" value="Nucleic acid-binding proteins"/>
    <property type="match status" value="1"/>
</dbReference>
<dbReference type="InterPro" id="IPR012156">
    <property type="entry name" value="Cold_shock_CspA"/>
</dbReference>
<dbReference type="InterPro" id="IPR050181">
    <property type="entry name" value="Cold_shock_domain"/>
</dbReference>
<dbReference type="InterPro" id="IPR011129">
    <property type="entry name" value="CSD"/>
</dbReference>
<dbReference type="InterPro" id="IPR019844">
    <property type="entry name" value="CSD_CS"/>
</dbReference>
<dbReference type="InterPro" id="IPR002059">
    <property type="entry name" value="CSP_DNA-bd"/>
</dbReference>
<dbReference type="InterPro" id="IPR012340">
    <property type="entry name" value="NA-bd_OB-fold"/>
</dbReference>
<dbReference type="PANTHER" id="PTHR11544">
    <property type="entry name" value="COLD SHOCK DOMAIN CONTAINING PROTEINS"/>
    <property type="match status" value="1"/>
</dbReference>
<dbReference type="Pfam" id="PF00313">
    <property type="entry name" value="CSD"/>
    <property type="match status" value="1"/>
</dbReference>
<dbReference type="PIRSF" id="PIRSF002599">
    <property type="entry name" value="Cold_shock_A"/>
    <property type="match status" value="1"/>
</dbReference>
<dbReference type="PRINTS" id="PR00050">
    <property type="entry name" value="COLDSHOCK"/>
</dbReference>
<dbReference type="SMART" id="SM00357">
    <property type="entry name" value="CSP"/>
    <property type="match status" value="1"/>
</dbReference>
<dbReference type="SUPFAM" id="SSF50249">
    <property type="entry name" value="Nucleic acid-binding proteins"/>
    <property type="match status" value="1"/>
</dbReference>
<dbReference type="PROSITE" id="PS00352">
    <property type="entry name" value="CSD_1"/>
    <property type="match status" value="1"/>
</dbReference>
<dbReference type="PROSITE" id="PS51857">
    <property type="entry name" value="CSD_2"/>
    <property type="match status" value="1"/>
</dbReference>
<accession>P51777</accession>
<proteinExistence type="evidence at protein level"/>
<organism>
    <name type="scientific">Bacillus subtilis (strain 168)</name>
    <dbReference type="NCBI Taxonomy" id="224308"/>
    <lineage>
        <taxon>Bacteria</taxon>
        <taxon>Bacillati</taxon>
        <taxon>Bacillota</taxon>
        <taxon>Bacilli</taxon>
        <taxon>Bacillales</taxon>
        <taxon>Bacillaceae</taxon>
        <taxon>Bacillus</taxon>
    </lineage>
</organism>
<comment type="subcellular location">
    <subcellularLocation>
        <location evidence="2">Cytoplasm</location>
    </subcellularLocation>
</comment>
<comment type="induction">
    <text>In response to low temperature.</text>
</comment>
<comment type="disruption phenotype">
    <text evidence="1">A double cshB-cspD mutant grows slowly at 15 degrees Celsius.</text>
</comment>
<reference key="1">
    <citation type="journal article" date="1996" name="Microbiology">
        <title>Organization of the Bacillus subtilis 168 chromosome between kdg and the attachment site of the SP beta prophage: use of long accurate PCR and yeast artificial chromosomes for sequencing.</title>
        <authorList>
            <person name="Capuano V."/>
            <person name="Galleron N."/>
            <person name="Pujic P."/>
            <person name="Sorokin A."/>
            <person name="Ehrlich S.D."/>
        </authorList>
    </citation>
    <scope>NUCLEOTIDE SEQUENCE [GENOMIC DNA]</scope>
    <source>
        <strain>168 / Marburg / ATCC 6051 / DSM 10 / JCM 1465 / NBRC 13719 / NCIMB 3610 / NRRL NRS-744 / VKM B-501</strain>
    </source>
</reference>
<reference key="2">
    <citation type="journal article" date="1997" name="Nature">
        <title>The complete genome sequence of the Gram-positive bacterium Bacillus subtilis.</title>
        <authorList>
            <person name="Kunst F."/>
            <person name="Ogasawara N."/>
            <person name="Moszer I."/>
            <person name="Albertini A.M."/>
            <person name="Alloni G."/>
            <person name="Azevedo V."/>
            <person name="Bertero M.G."/>
            <person name="Bessieres P."/>
            <person name="Bolotin A."/>
            <person name="Borchert S."/>
            <person name="Borriss R."/>
            <person name="Boursier L."/>
            <person name="Brans A."/>
            <person name="Braun M."/>
            <person name="Brignell S.C."/>
            <person name="Bron S."/>
            <person name="Brouillet S."/>
            <person name="Bruschi C.V."/>
            <person name="Caldwell B."/>
            <person name="Capuano V."/>
            <person name="Carter N.M."/>
            <person name="Choi S.-K."/>
            <person name="Codani J.-J."/>
            <person name="Connerton I.F."/>
            <person name="Cummings N.J."/>
            <person name="Daniel R.A."/>
            <person name="Denizot F."/>
            <person name="Devine K.M."/>
            <person name="Duesterhoeft A."/>
            <person name="Ehrlich S.D."/>
            <person name="Emmerson P.T."/>
            <person name="Entian K.-D."/>
            <person name="Errington J."/>
            <person name="Fabret C."/>
            <person name="Ferrari E."/>
            <person name="Foulger D."/>
            <person name="Fritz C."/>
            <person name="Fujita M."/>
            <person name="Fujita Y."/>
            <person name="Fuma S."/>
            <person name="Galizzi A."/>
            <person name="Galleron N."/>
            <person name="Ghim S.-Y."/>
            <person name="Glaser P."/>
            <person name="Goffeau A."/>
            <person name="Golightly E.J."/>
            <person name="Grandi G."/>
            <person name="Guiseppi G."/>
            <person name="Guy B.J."/>
            <person name="Haga K."/>
            <person name="Haiech J."/>
            <person name="Harwood C.R."/>
            <person name="Henaut A."/>
            <person name="Hilbert H."/>
            <person name="Holsappel S."/>
            <person name="Hosono S."/>
            <person name="Hullo M.-F."/>
            <person name="Itaya M."/>
            <person name="Jones L.-M."/>
            <person name="Joris B."/>
            <person name="Karamata D."/>
            <person name="Kasahara Y."/>
            <person name="Klaerr-Blanchard M."/>
            <person name="Klein C."/>
            <person name="Kobayashi Y."/>
            <person name="Koetter P."/>
            <person name="Koningstein G."/>
            <person name="Krogh S."/>
            <person name="Kumano M."/>
            <person name="Kurita K."/>
            <person name="Lapidus A."/>
            <person name="Lardinois S."/>
            <person name="Lauber J."/>
            <person name="Lazarevic V."/>
            <person name="Lee S.-M."/>
            <person name="Levine A."/>
            <person name="Liu H."/>
            <person name="Masuda S."/>
            <person name="Mauel C."/>
            <person name="Medigue C."/>
            <person name="Medina N."/>
            <person name="Mellado R.P."/>
            <person name="Mizuno M."/>
            <person name="Moestl D."/>
            <person name="Nakai S."/>
            <person name="Noback M."/>
            <person name="Noone D."/>
            <person name="O'Reilly M."/>
            <person name="Ogawa K."/>
            <person name="Ogiwara A."/>
            <person name="Oudega B."/>
            <person name="Park S.-H."/>
            <person name="Parro V."/>
            <person name="Pohl T.M."/>
            <person name="Portetelle D."/>
            <person name="Porwollik S."/>
            <person name="Prescott A.M."/>
            <person name="Presecan E."/>
            <person name="Pujic P."/>
            <person name="Purnelle B."/>
            <person name="Rapoport G."/>
            <person name="Rey M."/>
            <person name="Reynolds S."/>
            <person name="Rieger M."/>
            <person name="Rivolta C."/>
            <person name="Rocha E."/>
            <person name="Roche B."/>
            <person name="Rose M."/>
            <person name="Sadaie Y."/>
            <person name="Sato T."/>
            <person name="Scanlan E."/>
            <person name="Schleich S."/>
            <person name="Schroeter R."/>
            <person name="Scoffone F."/>
            <person name="Sekiguchi J."/>
            <person name="Sekowska A."/>
            <person name="Seror S.J."/>
            <person name="Serror P."/>
            <person name="Shin B.-S."/>
            <person name="Soldo B."/>
            <person name="Sorokin A."/>
            <person name="Tacconi E."/>
            <person name="Takagi T."/>
            <person name="Takahashi H."/>
            <person name="Takemaru K."/>
            <person name="Takeuchi M."/>
            <person name="Tamakoshi A."/>
            <person name="Tanaka T."/>
            <person name="Terpstra P."/>
            <person name="Tognoni A."/>
            <person name="Tosato V."/>
            <person name="Uchiyama S."/>
            <person name="Vandenbol M."/>
            <person name="Vannier F."/>
            <person name="Vassarotti A."/>
            <person name="Viari A."/>
            <person name="Wambutt R."/>
            <person name="Wedler E."/>
            <person name="Wedler H."/>
            <person name="Weitzenegger T."/>
            <person name="Winters P."/>
            <person name="Wipat A."/>
            <person name="Yamamoto H."/>
            <person name="Yamane K."/>
            <person name="Yasumoto K."/>
            <person name="Yata K."/>
            <person name="Yoshida K."/>
            <person name="Yoshikawa H.-F."/>
            <person name="Zumstein E."/>
            <person name="Yoshikawa H."/>
            <person name="Danchin A."/>
        </authorList>
    </citation>
    <scope>NUCLEOTIDE SEQUENCE [LARGE SCALE GENOMIC DNA]</scope>
    <source>
        <strain>168</strain>
    </source>
</reference>
<reference key="3">
    <citation type="journal article" date="1987" name="J. Bacteriol.">
        <title>Characterization and mapping of the Bacillus subtilis prtR gene.</title>
        <authorList>
            <person name="Yang M."/>
            <person name="Shimotsu H."/>
            <person name="Ferrari E."/>
            <person name="Henner D.J."/>
        </authorList>
    </citation>
    <scope>NUCLEOTIDE SEQUENCE [GENOMIC DNA] OF 59-66</scope>
</reference>
<reference key="4">
    <citation type="journal article" date="1996" name="J. Bacteriol.">
        <title>Cold shock stress-induced proteins in Bacillus subtilis.</title>
        <authorList>
            <person name="Graumann P."/>
            <person name="Schroeder K."/>
            <person name="Schmid R."/>
            <person name="Marahiel M.A."/>
        </authorList>
    </citation>
    <scope>PROTEIN SEQUENCE OF 1-40</scope>
    <source>
        <strain>168 / JH642</strain>
    </source>
</reference>
<reference key="5">
    <citation type="journal article" date="2006" name="J. Bacteriol.">
        <title>Cold-induced putative DEAD box RNA helicases CshA and CshB are essential for cold adaptation and interact with cold shock protein B in Bacillus subtilis.</title>
        <authorList>
            <person name="Hunger K."/>
            <person name="Beckering C.L."/>
            <person name="Wiegeshoff F."/>
            <person name="Graumann P.L."/>
            <person name="Marahiel M.A."/>
        </authorList>
    </citation>
    <scope>DISRUPTION PHENOTYPE</scope>
    <source>
        <strain>168 / JH642</strain>
    </source>
</reference>
<keyword id="KW-0010">Activator</keyword>
<keyword id="KW-0963">Cytoplasm</keyword>
<keyword id="KW-0903">Direct protein sequencing</keyword>
<keyword id="KW-0238">DNA-binding</keyword>
<keyword id="KW-1185">Reference proteome</keyword>
<keyword id="KW-0346">Stress response</keyword>
<keyword id="KW-0804">Transcription</keyword>
<keyword id="KW-0805">Transcription regulation</keyword>